<gene>
    <name evidence="1" type="primary">psd</name>
    <name type="ordered locus">WIGBR4280</name>
</gene>
<keyword id="KW-1003">Cell membrane</keyword>
<keyword id="KW-0210">Decarboxylase</keyword>
<keyword id="KW-0444">Lipid biosynthesis</keyword>
<keyword id="KW-0443">Lipid metabolism</keyword>
<keyword id="KW-0456">Lyase</keyword>
<keyword id="KW-0472">Membrane</keyword>
<keyword id="KW-0594">Phospholipid biosynthesis</keyword>
<keyword id="KW-1208">Phospholipid metabolism</keyword>
<keyword id="KW-0670">Pyruvate</keyword>
<keyword id="KW-1185">Reference proteome</keyword>
<keyword id="KW-0865">Zymogen</keyword>
<feature type="chain" id="PRO_0000029711" description="Phosphatidylserine decarboxylase beta chain" evidence="1">
    <location>
        <begin position="1"/>
        <end position="249"/>
    </location>
</feature>
<feature type="chain" id="PRO_0000029712" description="Phosphatidylserine decarboxylase alpha chain" evidence="1">
    <location>
        <begin position="250"/>
        <end position="287"/>
    </location>
</feature>
<feature type="active site" description="Charge relay system; for autoendoproteolytic cleavage activity" evidence="1">
    <location>
        <position position="86"/>
    </location>
</feature>
<feature type="active site" description="Charge relay system; for autoendoproteolytic cleavage activity" evidence="1">
    <location>
        <position position="143"/>
    </location>
</feature>
<feature type="active site" description="Charge relay system; for autoendoproteolytic cleavage activity" evidence="1">
    <location>
        <position position="250"/>
    </location>
</feature>
<feature type="active site" description="Schiff-base intermediate with substrate; via pyruvic acid; for decarboxylase activity" evidence="1">
    <location>
        <position position="250"/>
    </location>
</feature>
<feature type="site" description="Cleavage (non-hydrolytic); by autocatalysis" evidence="1">
    <location>
        <begin position="249"/>
        <end position="250"/>
    </location>
</feature>
<feature type="modified residue" description="Pyruvic acid (Ser); by autocatalysis" evidence="1">
    <location>
        <position position="250"/>
    </location>
</feature>
<comment type="function">
    <text evidence="1">Catalyzes the formation of phosphatidylethanolamine (PtdEtn) from phosphatidylserine (PtdSer).</text>
</comment>
<comment type="catalytic activity">
    <reaction evidence="1">
        <text>a 1,2-diacyl-sn-glycero-3-phospho-L-serine + H(+) = a 1,2-diacyl-sn-glycero-3-phosphoethanolamine + CO2</text>
        <dbReference type="Rhea" id="RHEA:20828"/>
        <dbReference type="ChEBI" id="CHEBI:15378"/>
        <dbReference type="ChEBI" id="CHEBI:16526"/>
        <dbReference type="ChEBI" id="CHEBI:57262"/>
        <dbReference type="ChEBI" id="CHEBI:64612"/>
        <dbReference type="EC" id="4.1.1.65"/>
    </reaction>
</comment>
<comment type="cofactor">
    <cofactor evidence="1">
        <name>pyruvate</name>
        <dbReference type="ChEBI" id="CHEBI:15361"/>
    </cofactor>
    <text evidence="1">Binds 1 pyruvoyl group covalently per subunit.</text>
</comment>
<comment type="pathway">
    <text evidence="1">Phospholipid metabolism; phosphatidylethanolamine biosynthesis; phosphatidylethanolamine from CDP-diacylglycerol: step 2/2.</text>
</comment>
<comment type="subunit">
    <text evidence="1">Heterodimer of a large membrane-associated beta subunit and a small pyruvoyl-containing alpha subunit.</text>
</comment>
<comment type="subcellular location">
    <subcellularLocation>
        <location evidence="1">Cell membrane</location>
        <topology evidence="1">Peripheral membrane protein</topology>
    </subcellularLocation>
</comment>
<comment type="PTM">
    <text evidence="1">Is synthesized initially as an inactive proenzyme. Formation of the active enzyme involves a self-maturation process in which the active site pyruvoyl group is generated from an internal serine residue via an autocatalytic post-translational modification. Two non-identical subunits are generated from the proenzyme in this reaction, and the pyruvate is formed at the N-terminus of the alpha chain, which is derived from the carboxyl end of the proenzyme. The autoendoproteolytic cleavage occurs by a canonical serine protease mechanism, in which the side chain hydroxyl group of the serine supplies its oxygen atom to form the C-terminus of the beta chain, while the remainder of the serine residue undergoes an oxidative deamination to produce ammonia and the pyruvoyl prosthetic group on the alpha chain. During this reaction, the Ser that is part of the protease active site of the proenzyme becomes the pyruvoyl prosthetic group, which constitutes an essential element of the active site of the mature decarboxylase.</text>
</comment>
<comment type="similarity">
    <text evidence="1">Belongs to the phosphatidylserine decarboxylase family. PSD-B subfamily. Prokaryotic type I sub-subfamily.</text>
</comment>
<protein>
    <recommendedName>
        <fullName evidence="1">Phosphatidylserine decarboxylase proenzyme</fullName>
        <ecNumber evidence="1">4.1.1.65</ecNumber>
    </recommendedName>
    <component>
        <recommendedName>
            <fullName evidence="1">Phosphatidylserine decarboxylase alpha chain</fullName>
        </recommendedName>
    </component>
    <component>
        <recommendedName>
            <fullName evidence="1">Phosphatidylserine decarboxylase beta chain</fullName>
        </recommendedName>
    </component>
</protein>
<evidence type="ECO:0000255" key="1">
    <source>
        <dbReference type="HAMAP-Rule" id="MF_00662"/>
    </source>
</evidence>
<organism>
    <name type="scientific">Wigglesworthia glossinidia brevipalpis</name>
    <dbReference type="NCBI Taxonomy" id="36870"/>
    <lineage>
        <taxon>Bacteria</taxon>
        <taxon>Pseudomonadati</taxon>
        <taxon>Pseudomonadota</taxon>
        <taxon>Gammaproteobacteria</taxon>
        <taxon>Enterobacterales</taxon>
        <taxon>Erwiniaceae</taxon>
        <taxon>Wigglesworthia</taxon>
    </lineage>
</organism>
<sequence length="287" mass="33645">MKTKLQYYLPKMLITKFFGWLAEKKAGIITYWIILFFIKIYKINLKEIKTKDIKSYNTFNDFFSRRIKIDCRRIDYDPSIIICPADGIITNFGYIENTEKLQLKNHNYTLKSLLAQNETMIDIFQHGIFFTTYLSPKNYHRIHMPCDGSLIKMIYVPGQLFSVNLKFYKNISNIFSKNERVICLFKTNFGYMIQILVGSIISGTISTSWYGKINYKRDGIIKLWKYNINSNNKPIFLKKGDEMGFFTLGSTVITLFSKKNILIKENLSNYKEVRVGDVLAYGIQNVK</sequence>
<accession>Q8D2C6</accession>
<proteinExistence type="inferred from homology"/>
<dbReference type="EC" id="4.1.1.65" evidence="1"/>
<dbReference type="EMBL" id="BA000021">
    <property type="protein sequence ID" value="BAC24574.1"/>
    <property type="molecule type" value="Genomic_DNA"/>
</dbReference>
<dbReference type="SMR" id="Q8D2C6"/>
<dbReference type="STRING" id="36870.gene:10368930"/>
<dbReference type="KEGG" id="wbr:psd"/>
<dbReference type="eggNOG" id="COG0688">
    <property type="taxonomic scope" value="Bacteria"/>
</dbReference>
<dbReference type="HOGENOM" id="CLU_029061_4_1_6"/>
<dbReference type="OrthoDB" id="9802030at2"/>
<dbReference type="UniPathway" id="UPA00558">
    <property type="reaction ID" value="UER00616"/>
</dbReference>
<dbReference type="Proteomes" id="UP000000562">
    <property type="component" value="Chromosome"/>
</dbReference>
<dbReference type="GO" id="GO:0005886">
    <property type="term" value="C:plasma membrane"/>
    <property type="evidence" value="ECO:0007669"/>
    <property type="project" value="UniProtKB-SubCell"/>
</dbReference>
<dbReference type="GO" id="GO:0004609">
    <property type="term" value="F:phosphatidylserine decarboxylase activity"/>
    <property type="evidence" value="ECO:0007669"/>
    <property type="project" value="UniProtKB-UniRule"/>
</dbReference>
<dbReference type="GO" id="GO:0006646">
    <property type="term" value="P:phosphatidylethanolamine biosynthetic process"/>
    <property type="evidence" value="ECO:0007669"/>
    <property type="project" value="UniProtKB-UniRule"/>
</dbReference>
<dbReference type="HAMAP" id="MF_00662">
    <property type="entry name" value="PS_decarb_PSD_B_type1"/>
    <property type="match status" value="1"/>
</dbReference>
<dbReference type="InterPro" id="IPR003817">
    <property type="entry name" value="PS_Dcarbxylase"/>
</dbReference>
<dbReference type="InterPro" id="IPR033177">
    <property type="entry name" value="PSD-B"/>
</dbReference>
<dbReference type="InterPro" id="IPR033178">
    <property type="entry name" value="PSD_type1_pro"/>
</dbReference>
<dbReference type="NCBIfam" id="TIGR00163">
    <property type="entry name" value="PS_decarb"/>
    <property type="match status" value="1"/>
</dbReference>
<dbReference type="PANTHER" id="PTHR10067">
    <property type="entry name" value="PHOSPHATIDYLSERINE DECARBOXYLASE"/>
    <property type="match status" value="1"/>
</dbReference>
<dbReference type="PANTHER" id="PTHR10067:SF6">
    <property type="entry name" value="PHOSPHATIDYLSERINE DECARBOXYLASE PROENZYME, MITOCHONDRIAL"/>
    <property type="match status" value="1"/>
</dbReference>
<dbReference type="Pfam" id="PF02666">
    <property type="entry name" value="PS_Dcarbxylase"/>
    <property type="match status" value="1"/>
</dbReference>
<name>PSD_WIGBR</name>
<reference key="1">
    <citation type="journal article" date="2002" name="Nat. Genet.">
        <title>Genome sequence of the endocellular obligate symbiont of tsetse flies, Wigglesworthia glossinidia.</title>
        <authorList>
            <person name="Akman L."/>
            <person name="Yamashita A."/>
            <person name="Watanabe H."/>
            <person name="Oshima K."/>
            <person name="Shiba T."/>
            <person name="Hattori M."/>
            <person name="Aksoy S."/>
        </authorList>
    </citation>
    <scope>NUCLEOTIDE SEQUENCE [LARGE SCALE GENOMIC DNA]</scope>
</reference>